<accession>P86785</accession>
<name>GIGA2_MAGGI</name>
<sequence>MNKMSPLYVLALCCLATTVFAKYDCTNNGGYGCKYGGTCHFYGFCICPKGFQGEDCGLKTELISTAANCTAECKNGGTCYESDRCYCPHGFIGDMCEIPDTVARCAPDRMIIEAYRPLGFVGEVYMFQNRKSCALKQVPSDIRDMMKLERVVLHSDKTECALTRTPDTPKLGDVTMKTTVVSTHNYNQFGPRDSIMDVSCVHTNSFQGSTKEITETAFPFRMVALDMNGEPVQALAANESIILQFEPVGIPDVRGVMVEYLEVYSINANSNEVVSKTIIENGCVLRTAQQHLEIPIRNYSEMXRQGTSWVARSAMRAFILLPGDHCYSSLDYASVPEVPR</sequence>
<comment type="tissue specificity">
    <text evidence="3">Component of the organic matrix of calcified shell layers.</text>
</comment>
<comment type="sequence caution" evidence="5">
    <conflict type="frameshift">
        <sequence resource="EMBL" id="AM868448"/>
    </conflict>
</comment>
<dbReference type="EMBL" id="AM864770">
    <property type="status" value="NOT_ANNOTATED_CDS"/>
    <property type="molecule type" value="mRNA"/>
</dbReference>
<dbReference type="EMBL" id="AM868448">
    <property type="status" value="NOT_ANNOTATED_CDS"/>
    <property type="molecule type" value="mRNA"/>
</dbReference>
<dbReference type="HOGENOM" id="CLU_746501_0_0_1"/>
<dbReference type="InParanoid" id="P86785"/>
<dbReference type="Proteomes" id="UP000005408">
    <property type="component" value="Unplaced"/>
</dbReference>
<dbReference type="GO" id="GO:0009986">
    <property type="term" value="C:cell surface"/>
    <property type="evidence" value="ECO:0007669"/>
    <property type="project" value="TreeGrafter"/>
</dbReference>
<dbReference type="GO" id="GO:0005576">
    <property type="term" value="C:extracellular region"/>
    <property type="evidence" value="ECO:0007669"/>
    <property type="project" value="TreeGrafter"/>
</dbReference>
<dbReference type="GO" id="GO:0005102">
    <property type="term" value="F:signaling receptor binding"/>
    <property type="evidence" value="ECO:0007669"/>
    <property type="project" value="TreeGrafter"/>
</dbReference>
<dbReference type="CDD" id="cd00054">
    <property type="entry name" value="EGF_CA"/>
    <property type="match status" value="1"/>
</dbReference>
<dbReference type="Gene3D" id="2.10.25.10">
    <property type="entry name" value="Laminin"/>
    <property type="match status" value="1"/>
</dbReference>
<dbReference type="InterPro" id="IPR050969">
    <property type="entry name" value="Dev_Signal_Modulators"/>
</dbReference>
<dbReference type="InterPro" id="IPR000742">
    <property type="entry name" value="EGF-like_dom"/>
</dbReference>
<dbReference type="PANTHER" id="PTHR14949:SF56">
    <property type="entry name" value="EGF-LIKE-DOMAIN, MULTIPLE 7"/>
    <property type="match status" value="1"/>
</dbReference>
<dbReference type="PANTHER" id="PTHR14949">
    <property type="entry name" value="EGF-LIKE-DOMAIN, MULTIPLE 7, 8"/>
    <property type="match status" value="1"/>
</dbReference>
<dbReference type="SMART" id="SM00181">
    <property type="entry name" value="EGF"/>
    <property type="match status" value="2"/>
</dbReference>
<dbReference type="SUPFAM" id="SSF57196">
    <property type="entry name" value="EGF/Laminin"/>
    <property type="match status" value="1"/>
</dbReference>
<dbReference type="PROSITE" id="PS00022">
    <property type="entry name" value="EGF_1"/>
    <property type="match status" value="2"/>
</dbReference>
<dbReference type="PROSITE" id="PS01186">
    <property type="entry name" value="EGF_2"/>
    <property type="match status" value="2"/>
</dbReference>
<dbReference type="PROSITE" id="PS50026">
    <property type="entry name" value="EGF_3"/>
    <property type="match status" value="2"/>
</dbReference>
<reference evidence="5" key="1">
    <citation type="journal article" date="2008" name="Gene">
        <title>Increasing genomic information in bivalves through new EST collections in four species: development of new genetic markers for environmental studies and genome evolution.</title>
        <authorList>
            <person name="Tanguy A."/>
            <person name="Bierne N."/>
            <person name="Saavedra C."/>
            <person name="Pina B."/>
            <person name="Bachere E."/>
            <person name="Kube M."/>
            <person name="Bazin E."/>
            <person name="Bonhomme F."/>
            <person name="Boudry P."/>
            <person name="Boulo V."/>
            <person name="Boutet I."/>
            <person name="Cancela L."/>
            <person name="Dossat C."/>
            <person name="Favrel P."/>
            <person name="Huvet A."/>
            <person name="Jarque S."/>
            <person name="Jollivet D."/>
            <person name="Klages S."/>
            <person name="Lapegue S."/>
            <person name="Leite R."/>
            <person name="Moal J."/>
            <person name="Moraga D."/>
            <person name="Reinhardt R."/>
            <person name="Samain J.F."/>
            <person name="Zouros E."/>
            <person name="Canario A."/>
        </authorList>
    </citation>
    <scope>NUCLEOTIDE SEQUENCE [MRNA]</scope>
</reference>
<reference evidence="5" key="2">
    <citation type="journal article" date="2010" name="FEBS Lett.">
        <title>Proteomic identification of novel proteins from the calcifying shell matrix of the Pacific oyster Crassostrea gigas.</title>
        <authorList>
            <person name="Marie B."/>
            <person name="Zanella-Cleon I."/>
            <person name="Becchi M."/>
            <person name="Marin F."/>
        </authorList>
    </citation>
    <scope>PROTEIN SEQUENCE OF 50-59; 137-143; 212-221 AND 287-297</scope>
    <scope>TISSUE SPECIFICITY</scope>
    <source>
        <tissue evidence="3">Shell</tissue>
    </source>
</reference>
<proteinExistence type="evidence at protein level"/>
<keyword id="KW-0903">Direct protein sequencing</keyword>
<keyword id="KW-1015">Disulfide bond</keyword>
<keyword id="KW-0245">EGF-like domain</keyword>
<keyword id="KW-1185">Reference proteome</keyword>
<keyword id="KW-0677">Repeat</keyword>
<keyword id="KW-0732">Signal</keyword>
<feature type="signal peptide" evidence="1">
    <location>
        <begin position="1"/>
        <end position="21"/>
    </location>
</feature>
<feature type="chain" id="PRO_0000403307" description="Gigasin-2" evidence="1">
    <location>
        <begin position="22"/>
        <end position="340"/>
    </location>
</feature>
<feature type="domain" description="EGF-like 1" evidence="2">
    <location>
        <begin position="22"/>
        <end position="57"/>
    </location>
</feature>
<feature type="domain" description="EGF-like 2" evidence="2">
    <location>
        <begin position="65"/>
        <end position="97"/>
    </location>
</feature>
<feature type="disulfide bond" evidence="2">
    <location>
        <begin position="25"/>
        <end position="39"/>
    </location>
</feature>
<feature type="disulfide bond" evidence="2">
    <location>
        <begin position="33"/>
        <end position="45"/>
    </location>
</feature>
<feature type="disulfide bond" evidence="2">
    <location>
        <begin position="47"/>
        <end position="56"/>
    </location>
</feature>
<feature type="disulfide bond" evidence="2">
    <location>
        <begin position="69"/>
        <end position="79"/>
    </location>
</feature>
<feature type="disulfide bond" evidence="2">
    <location>
        <begin position="73"/>
        <end position="85"/>
    </location>
</feature>
<feature type="disulfide bond" evidence="2">
    <location>
        <begin position="87"/>
        <end position="96"/>
    </location>
</feature>
<evidence type="ECO:0000255" key="1"/>
<evidence type="ECO:0000255" key="2">
    <source>
        <dbReference type="PROSITE-ProRule" id="PRU00076"/>
    </source>
</evidence>
<evidence type="ECO:0000269" key="3">
    <source ref="2"/>
</evidence>
<evidence type="ECO:0000303" key="4">
    <source ref="2"/>
</evidence>
<evidence type="ECO:0000305" key="5"/>
<organism>
    <name type="scientific">Magallana gigas</name>
    <name type="common">Pacific oyster</name>
    <name type="synonym">Crassostrea gigas</name>
    <dbReference type="NCBI Taxonomy" id="29159"/>
    <lineage>
        <taxon>Eukaryota</taxon>
        <taxon>Metazoa</taxon>
        <taxon>Spiralia</taxon>
        <taxon>Lophotrochozoa</taxon>
        <taxon>Mollusca</taxon>
        <taxon>Bivalvia</taxon>
        <taxon>Autobranchia</taxon>
        <taxon>Pteriomorphia</taxon>
        <taxon>Ostreida</taxon>
        <taxon>Ostreoidea</taxon>
        <taxon>Ostreidae</taxon>
        <taxon>Magallana</taxon>
    </lineage>
</organism>
<protein>
    <recommendedName>
        <fullName evidence="4">Gigasin-2</fullName>
    </recommendedName>
</protein>